<gene>
    <name evidence="1" type="primary">glmM</name>
    <name type="ordered locus">Mmcs_1134</name>
</gene>
<keyword id="KW-0413">Isomerase</keyword>
<keyword id="KW-0460">Magnesium</keyword>
<keyword id="KW-0479">Metal-binding</keyword>
<keyword id="KW-0597">Phosphoprotein</keyword>
<sequence length="445" mass="45999">MARLFGTDGVRGVANRDLTAELALALGSAAARRLSTAGHARRRVAVVGRDPRASGEMLEAAVIAGLTSEGVDALRVGVLPTPAVAYLTSAYDADFGVMISASHNPMPDNGIKIFGPGGHKLDDATEDRIAELVQQGPGERPVGAGIGRVVDAPDALDRYLRHVGKAVTTRLDALTVVVDCAHGAASAAAPLAYRAAGANVLTINADPNGLNINDGCGSTHMETLQAAVVSYGADLGLAHDGDADRCLAVDANGRVIDGDAIMVVLALAMRESGELASDTLVATVMSNLGLHLAMRDAGIEVRTTSVGDRYVLEELRAGSYSLGGEQSGHIVMPSMGTTGDGILTGLRLMSRMAQTRKSLAALAEPMHTLPQVLINVQVADKTTVAQAPSVQSAVAEAEAALGDTGRILLRPSGTEQVVRVMVEAADEDTARQLAVRVAESVSEQR</sequence>
<dbReference type="EC" id="5.4.2.10" evidence="1"/>
<dbReference type="EMBL" id="CP000384">
    <property type="protein sequence ID" value="ABG07247.1"/>
    <property type="status" value="ALT_INIT"/>
    <property type="molecule type" value="Genomic_DNA"/>
</dbReference>
<dbReference type="SMR" id="Q1BCY7"/>
<dbReference type="KEGG" id="mmc:Mmcs_1134"/>
<dbReference type="HOGENOM" id="CLU_016950_7_0_11"/>
<dbReference type="BioCyc" id="MSP164756:G1G6O-1160-MONOMER"/>
<dbReference type="GO" id="GO:0005829">
    <property type="term" value="C:cytosol"/>
    <property type="evidence" value="ECO:0007669"/>
    <property type="project" value="TreeGrafter"/>
</dbReference>
<dbReference type="GO" id="GO:0000287">
    <property type="term" value="F:magnesium ion binding"/>
    <property type="evidence" value="ECO:0007669"/>
    <property type="project" value="UniProtKB-UniRule"/>
</dbReference>
<dbReference type="GO" id="GO:0008966">
    <property type="term" value="F:phosphoglucosamine mutase activity"/>
    <property type="evidence" value="ECO:0007669"/>
    <property type="project" value="UniProtKB-UniRule"/>
</dbReference>
<dbReference type="GO" id="GO:0004615">
    <property type="term" value="F:phosphomannomutase activity"/>
    <property type="evidence" value="ECO:0007669"/>
    <property type="project" value="TreeGrafter"/>
</dbReference>
<dbReference type="GO" id="GO:0005975">
    <property type="term" value="P:carbohydrate metabolic process"/>
    <property type="evidence" value="ECO:0007669"/>
    <property type="project" value="InterPro"/>
</dbReference>
<dbReference type="GO" id="GO:0009252">
    <property type="term" value="P:peptidoglycan biosynthetic process"/>
    <property type="evidence" value="ECO:0007669"/>
    <property type="project" value="TreeGrafter"/>
</dbReference>
<dbReference type="GO" id="GO:0006048">
    <property type="term" value="P:UDP-N-acetylglucosamine biosynthetic process"/>
    <property type="evidence" value="ECO:0007669"/>
    <property type="project" value="TreeGrafter"/>
</dbReference>
<dbReference type="CDD" id="cd05802">
    <property type="entry name" value="GlmM"/>
    <property type="match status" value="1"/>
</dbReference>
<dbReference type="FunFam" id="3.30.310.50:FF:000001">
    <property type="entry name" value="Phosphoglucosamine mutase"/>
    <property type="match status" value="1"/>
</dbReference>
<dbReference type="FunFam" id="3.40.120.10:FF:000001">
    <property type="entry name" value="Phosphoglucosamine mutase"/>
    <property type="match status" value="1"/>
</dbReference>
<dbReference type="FunFam" id="3.40.120.10:FF:000002">
    <property type="entry name" value="Phosphoglucosamine mutase"/>
    <property type="match status" value="1"/>
</dbReference>
<dbReference type="Gene3D" id="3.40.120.10">
    <property type="entry name" value="Alpha-D-Glucose-1,6-Bisphosphate, subunit A, domain 3"/>
    <property type="match status" value="3"/>
</dbReference>
<dbReference type="Gene3D" id="3.30.310.50">
    <property type="entry name" value="Alpha-D-phosphohexomutase, C-terminal domain"/>
    <property type="match status" value="1"/>
</dbReference>
<dbReference type="HAMAP" id="MF_01554_B">
    <property type="entry name" value="GlmM_B"/>
    <property type="match status" value="1"/>
</dbReference>
<dbReference type="InterPro" id="IPR005844">
    <property type="entry name" value="A-D-PHexomutase_a/b/a-I"/>
</dbReference>
<dbReference type="InterPro" id="IPR016055">
    <property type="entry name" value="A-D-PHexomutase_a/b/a-I/II/III"/>
</dbReference>
<dbReference type="InterPro" id="IPR005845">
    <property type="entry name" value="A-D-PHexomutase_a/b/a-II"/>
</dbReference>
<dbReference type="InterPro" id="IPR005846">
    <property type="entry name" value="A-D-PHexomutase_a/b/a-III"/>
</dbReference>
<dbReference type="InterPro" id="IPR005843">
    <property type="entry name" value="A-D-PHexomutase_C"/>
</dbReference>
<dbReference type="InterPro" id="IPR036900">
    <property type="entry name" value="A-D-PHexomutase_C_sf"/>
</dbReference>
<dbReference type="InterPro" id="IPR016066">
    <property type="entry name" value="A-D-PHexomutase_CS"/>
</dbReference>
<dbReference type="InterPro" id="IPR005841">
    <property type="entry name" value="Alpha-D-phosphohexomutase_SF"/>
</dbReference>
<dbReference type="InterPro" id="IPR006352">
    <property type="entry name" value="GlmM_bact"/>
</dbReference>
<dbReference type="InterPro" id="IPR050060">
    <property type="entry name" value="Phosphoglucosamine_mutase"/>
</dbReference>
<dbReference type="NCBIfam" id="TIGR01455">
    <property type="entry name" value="glmM"/>
    <property type="match status" value="1"/>
</dbReference>
<dbReference type="PANTHER" id="PTHR42946:SF1">
    <property type="entry name" value="PHOSPHOGLUCOMUTASE (ALPHA-D-GLUCOSE-1,6-BISPHOSPHATE-DEPENDENT)"/>
    <property type="match status" value="1"/>
</dbReference>
<dbReference type="PANTHER" id="PTHR42946">
    <property type="entry name" value="PHOSPHOHEXOSE MUTASE"/>
    <property type="match status" value="1"/>
</dbReference>
<dbReference type="Pfam" id="PF02878">
    <property type="entry name" value="PGM_PMM_I"/>
    <property type="match status" value="1"/>
</dbReference>
<dbReference type="Pfam" id="PF02879">
    <property type="entry name" value="PGM_PMM_II"/>
    <property type="match status" value="1"/>
</dbReference>
<dbReference type="Pfam" id="PF02880">
    <property type="entry name" value="PGM_PMM_III"/>
    <property type="match status" value="1"/>
</dbReference>
<dbReference type="Pfam" id="PF00408">
    <property type="entry name" value="PGM_PMM_IV"/>
    <property type="match status" value="1"/>
</dbReference>
<dbReference type="PRINTS" id="PR00509">
    <property type="entry name" value="PGMPMM"/>
</dbReference>
<dbReference type="SUPFAM" id="SSF55957">
    <property type="entry name" value="Phosphoglucomutase, C-terminal domain"/>
    <property type="match status" value="1"/>
</dbReference>
<dbReference type="SUPFAM" id="SSF53738">
    <property type="entry name" value="Phosphoglucomutase, first 3 domains"/>
    <property type="match status" value="3"/>
</dbReference>
<dbReference type="PROSITE" id="PS00710">
    <property type="entry name" value="PGM_PMM"/>
    <property type="match status" value="1"/>
</dbReference>
<evidence type="ECO:0000255" key="1">
    <source>
        <dbReference type="HAMAP-Rule" id="MF_01554"/>
    </source>
</evidence>
<evidence type="ECO:0000305" key="2"/>
<accession>Q1BCY7</accession>
<comment type="function">
    <text evidence="1">Catalyzes the conversion of glucosamine-6-phosphate to glucosamine-1-phosphate.</text>
</comment>
<comment type="catalytic activity">
    <reaction evidence="1">
        <text>alpha-D-glucosamine 1-phosphate = D-glucosamine 6-phosphate</text>
        <dbReference type="Rhea" id="RHEA:23424"/>
        <dbReference type="ChEBI" id="CHEBI:58516"/>
        <dbReference type="ChEBI" id="CHEBI:58725"/>
        <dbReference type="EC" id="5.4.2.10"/>
    </reaction>
</comment>
<comment type="cofactor">
    <cofactor evidence="1">
        <name>Mg(2+)</name>
        <dbReference type="ChEBI" id="CHEBI:18420"/>
    </cofactor>
    <text evidence="1">Binds 1 Mg(2+) ion per subunit.</text>
</comment>
<comment type="PTM">
    <text evidence="1">Activated by phosphorylation.</text>
</comment>
<comment type="similarity">
    <text evidence="1">Belongs to the phosphohexose mutase family.</text>
</comment>
<comment type="sequence caution" evidence="2">
    <conflict type="erroneous initiation">
        <sequence resource="EMBL-CDS" id="ABG07247"/>
    </conflict>
</comment>
<reference key="1">
    <citation type="submission" date="2006-06" db="EMBL/GenBank/DDBJ databases">
        <title>Complete sequence of chromosome of Mycobacterium sp. MCS.</title>
        <authorList>
            <consortium name="US DOE Joint Genome Institute"/>
            <person name="Copeland A."/>
            <person name="Lucas S."/>
            <person name="Lapidus A."/>
            <person name="Barry K."/>
            <person name="Detter J.C."/>
            <person name="Glavina del Rio T."/>
            <person name="Hammon N."/>
            <person name="Israni S."/>
            <person name="Dalin E."/>
            <person name="Tice H."/>
            <person name="Pitluck S."/>
            <person name="Martinez M."/>
            <person name="Schmutz J."/>
            <person name="Larimer F."/>
            <person name="Land M."/>
            <person name="Hauser L."/>
            <person name="Kyrpides N."/>
            <person name="Kim E."/>
            <person name="Miller C.D."/>
            <person name="Hughes J.E."/>
            <person name="Anderson A.J."/>
            <person name="Sims R.C."/>
            <person name="Richardson P."/>
        </authorList>
    </citation>
    <scope>NUCLEOTIDE SEQUENCE [LARGE SCALE GENOMIC DNA]</scope>
    <source>
        <strain>MCS</strain>
    </source>
</reference>
<name>GLMM_MYCSS</name>
<proteinExistence type="inferred from homology"/>
<protein>
    <recommendedName>
        <fullName evidence="1">Phosphoglucosamine mutase</fullName>
        <ecNumber evidence="1">5.4.2.10</ecNumber>
    </recommendedName>
</protein>
<organism>
    <name type="scientific">Mycobacterium sp. (strain MCS)</name>
    <dbReference type="NCBI Taxonomy" id="164756"/>
    <lineage>
        <taxon>Bacteria</taxon>
        <taxon>Bacillati</taxon>
        <taxon>Actinomycetota</taxon>
        <taxon>Actinomycetes</taxon>
        <taxon>Mycobacteriales</taxon>
        <taxon>Mycobacteriaceae</taxon>
        <taxon>Mycobacterium</taxon>
    </lineage>
</organism>
<feature type="chain" id="PRO_0000305655" description="Phosphoglucosamine mutase">
    <location>
        <begin position="1"/>
        <end position="445"/>
    </location>
</feature>
<feature type="active site" description="Phosphoserine intermediate" evidence="1">
    <location>
        <position position="102"/>
    </location>
</feature>
<feature type="binding site" description="via phosphate group" evidence="1">
    <location>
        <position position="102"/>
    </location>
    <ligand>
        <name>Mg(2+)</name>
        <dbReference type="ChEBI" id="CHEBI:18420"/>
    </ligand>
</feature>
<feature type="binding site" evidence="1">
    <location>
        <position position="240"/>
    </location>
    <ligand>
        <name>Mg(2+)</name>
        <dbReference type="ChEBI" id="CHEBI:18420"/>
    </ligand>
</feature>
<feature type="binding site" evidence="1">
    <location>
        <position position="242"/>
    </location>
    <ligand>
        <name>Mg(2+)</name>
        <dbReference type="ChEBI" id="CHEBI:18420"/>
    </ligand>
</feature>
<feature type="binding site" evidence="1">
    <location>
        <position position="244"/>
    </location>
    <ligand>
        <name>Mg(2+)</name>
        <dbReference type="ChEBI" id="CHEBI:18420"/>
    </ligand>
</feature>
<feature type="modified residue" description="Phosphoserine" evidence="1">
    <location>
        <position position="102"/>
    </location>
</feature>